<organism>
    <name type="scientific">Granulibacter bethesdensis (strain ATCC BAA-1260 / CGDNIH1)</name>
    <dbReference type="NCBI Taxonomy" id="391165"/>
    <lineage>
        <taxon>Bacteria</taxon>
        <taxon>Pseudomonadati</taxon>
        <taxon>Pseudomonadota</taxon>
        <taxon>Alphaproteobacteria</taxon>
        <taxon>Acetobacterales</taxon>
        <taxon>Acetobacteraceae</taxon>
        <taxon>Granulibacter</taxon>
    </lineage>
</organism>
<protein>
    <recommendedName>
        <fullName evidence="1">Pyrroloquinoline-quinone synthase</fullName>
        <ecNumber evidence="1">1.3.3.11</ecNumber>
    </recommendedName>
    <alternativeName>
        <fullName evidence="1">Coenzyme PQQ synthesis protein C</fullName>
    </alternativeName>
    <alternativeName>
        <fullName evidence="1">Pyrroloquinoline quinone biosynthesis protein C</fullName>
    </alternativeName>
</protein>
<keyword id="KW-0560">Oxidoreductase</keyword>
<keyword id="KW-0884">PQQ biosynthesis</keyword>
<keyword id="KW-1185">Reference proteome</keyword>
<reference key="1">
    <citation type="journal article" date="2007" name="J. Bacteriol.">
        <title>Genome sequence analysis of the emerging human pathogenic acetic acid bacterium Granulibacter bethesdensis.</title>
        <authorList>
            <person name="Greenberg D.E."/>
            <person name="Porcella S.F."/>
            <person name="Zelazny A.M."/>
            <person name="Virtaneva K."/>
            <person name="Sturdevant D.E."/>
            <person name="Kupko J.J. III"/>
            <person name="Barbian K.D."/>
            <person name="Babar A."/>
            <person name="Dorward D.W."/>
            <person name="Holland S.M."/>
        </authorList>
    </citation>
    <scope>NUCLEOTIDE SEQUENCE [LARGE SCALE GENOMIC DNA]</scope>
    <source>
        <strain>ATCC BAA-1260 / CGDNIH1</strain>
    </source>
</reference>
<sequence length="255" mass="28760">MTQLHNRTAGQETNRVMTPDELEAALRAVGAERYHNLHPFHRLLHDGALTRGQVQAWALNRYHYQASIPAKDAALLSRLPTAELRREWRRRLVDHDGTEPGTGGIARWLKLAEGVGLDAAYVESREGLLPTTRFAVDAYVTFCREKPILEAIASSLTEMFSPTIIRERVSGMLANYDWVSEETLAYFKPRLTQAPRDVDFALAYVKEHARTPEQQQAVIAALRFKCDVLWSQLDALYYSYVAPGNIPPGAFVPEV</sequence>
<accession>Q0BQS6</accession>
<gene>
    <name evidence="1" type="primary">pqqC</name>
    <name type="ordered locus">GbCGDNIH1_1928</name>
</gene>
<feature type="chain" id="PRO_1000061669" description="Pyrroloquinoline-quinone synthase">
    <location>
        <begin position="1"/>
        <end position="255"/>
    </location>
</feature>
<proteinExistence type="inferred from homology"/>
<name>PQQC_GRABC</name>
<comment type="function">
    <text evidence="1">Ring cyclization and eight-electron oxidation of 3a-(2-amino-2-carboxyethyl)-4,5-dioxo-4,5,6,7,8,9-hexahydroquinoline-7,9-dicarboxylic-acid to PQQ.</text>
</comment>
<comment type="catalytic activity">
    <reaction evidence="1">
        <text>6-(2-amino-2-carboxyethyl)-7,8-dioxo-1,2,3,4,7,8-hexahydroquinoline-2,4-dicarboxylate + 3 O2 = pyrroloquinoline quinone + 2 H2O2 + 2 H2O + H(+)</text>
        <dbReference type="Rhea" id="RHEA:10692"/>
        <dbReference type="ChEBI" id="CHEBI:15377"/>
        <dbReference type="ChEBI" id="CHEBI:15378"/>
        <dbReference type="ChEBI" id="CHEBI:15379"/>
        <dbReference type="ChEBI" id="CHEBI:16240"/>
        <dbReference type="ChEBI" id="CHEBI:58442"/>
        <dbReference type="ChEBI" id="CHEBI:58778"/>
        <dbReference type="EC" id="1.3.3.11"/>
    </reaction>
</comment>
<comment type="pathway">
    <text evidence="1">Cofactor biosynthesis; pyrroloquinoline quinone biosynthesis.</text>
</comment>
<comment type="similarity">
    <text evidence="1">Belongs to the PqqC family.</text>
</comment>
<dbReference type="EC" id="1.3.3.11" evidence="1"/>
<dbReference type="EMBL" id="CP000394">
    <property type="protein sequence ID" value="ABI62826.1"/>
    <property type="molecule type" value="Genomic_DNA"/>
</dbReference>
<dbReference type="RefSeq" id="WP_011632628.1">
    <property type="nucleotide sequence ID" value="NC_008343.2"/>
</dbReference>
<dbReference type="SMR" id="Q0BQS6"/>
<dbReference type="STRING" id="391165.GbCGDNIH1_1928"/>
<dbReference type="GeneID" id="69746115"/>
<dbReference type="KEGG" id="gbe:GbCGDNIH1_1928"/>
<dbReference type="eggNOG" id="COG5424">
    <property type="taxonomic scope" value="Bacteria"/>
</dbReference>
<dbReference type="HOGENOM" id="CLU_080136_0_0_5"/>
<dbReference type="OrthoDB" id="9800756at2"/>
<dbReference type="UniPathway" id="UPA00539"/>
<dbReference type="Proteomes" id="UP000001963">
    <property type="component" value="Chromosome"/>
</dbReference>
<dbReference type="GO" id="GO:0033732">
    <property type="term" value="F:pyrroloquinoline-quinone synthase activity"/>
    <property type="evidence" value="ECO:0007669"/>
    <property type="project" value="UniProtKB-EC"/>
</dbReference>
<dbReference type="GO" id="GO:0018189">
    <property type="term" value="P:pyrroloquinoline quinone biosynthetic process"/>
    <property type="evidence" value="ECO:0007669"/>
    <property type="project" value="UniProtKB-UniRule"/>
</dbReference>
<dbReference type="GO" id="GO:0006790">
    <property type="term" value="P:sulfur compound metabolic process"/>
    <property type="evidence" value="ECO:0007669"/>
    <property type="project" value="UniProtKB-ARBA"/>
</dbReference>
<dbReference type="Gene3D" id="1.20.910.10">
    <property type="entry name" value="Heme oxygenase-like"/>
    <property type="match status" value="1"/>
</dbReference>
<dbReference type="HAMAP" id="MF_00654">
    <property type="entry name" value="PQQ_syn_PqqC"/>
    <property type="match status" value="1"/>
</dbReference>
<dbReference type="InterPro" id="IPR016084">
    <property type="entry name" value="Haem_Oase-like_multi-hlx"/>
</dbReference>
<dbReference type="InterPro" id="IPR011845">
    <property type="entry name" value="PqqC"/>
</dbReference>
<dbReference type="InterPro" id="IPR039068">
    <property type="entry name" value="PqqC-like"/>
</dbReference>
<dbReference type="InterPro" id="IPR004305">
    <property type="entry name" value="Thiaminase-2/PQQC"/>
</dbReference>
<dbReference type="NCBIfam" id="TIGR02111">
    <property type="entry name" value="PQQ_syn_pqqC"/>
    <property type="match status" value="1"/>
</dbReference>
<dbReference type="PANTHER" id="PTHR40279:SF3">
    <property type="entry name" value="4-AMINOBENZOATE SYNTHASE"/>
    <property type="match status" value="1"/>
</dbReference>
<dbReference type="PANTHER" id="PTHR40279">
    <property type="entry name" value="PQQC-LIKE PROTEIN"/>
    <property type="match status" value="1"/>
</dbReference>
<dbReference type="Pfam" id="PF03070">
    <property type="entry name" value="TENA_THI-4"/>
    <property type="match status" value="1"/>
</dbReference>
<dbReference type="SUPFAM" id="SSF48613">
    <property type="entry name" value="Heme oxygenase-like"/>
    <property type="match status" value="1"/>
</dbReference>
<evidence type="ECO:0000255" key="1">
    <source>
        <dbReference type="HAMAP-Rule" id="MF_00654"/>
    </source>
</evidence>